<feature type="chain" id="PRO_1000196635" description="DNA-directed RNA polymerase subunit alpha">
    <location>
        <begin position="1"/>
        <end position="347"/>
    </location>
</feature>
<feature type="region of interest" description="Alpha N-terminal domain (alpha-NTD)" evidence="1">
    <location>
        <begin position="1"/>
        <end position="243"/>
    </location>
</feature>
<feature type="region of interest" description="Alpha C-terminal domain (alpha-CTD)" evidence="1">
    <location>
        <begin position="260"/>
        <end position="347"/>
    </location>
</feature>
<protein>
    <recommendedName>
        <fullName evidence="1">DNA-directed RNA polymerase subunit alpha</fullName>
        <shortName evidence="1">RNAP subunit alpha</shortName>
        <ecNumber evidence="1">2.7.7.6</ecNumber>
    </recommendedName>
    <alternativeName>
        <fullName evidence="1">RNA polymerase subunit alpha</fullName>
    </alternativeName>
    <alternativeName>
        <fullName evidence="1">Transcriptase subunit alpha</fullName>
    </alternativeName>
</protein>
<keyword id="KW-0240">DNA-directed RNA polymerase</keyword>
<keyword id="KW-0548">Nucleotidyltransferase</keyword>
<keyword id="KW-0804">Transcription</keyword>
<keyword id="KW-0808">Transferase</keyword>
<reference key="1">
    <citation type="submission" date="2008-10" db="EMBL/GenBank/DDBJ databases">
        <title>Complete sequence of Desulfovibrio vulgaris str. 'Miyazaki F'.</title>
        <authorList>
            <person name="Lucas S."/>
            <person name="Copeland A."/>
            <person name="Lapidus A."/>
            <person name="Glavina del Rio T."/>
            <person name="Dalin E."/>
            <person name="Tice H."/>
            <person name="Bruce D."/>
            <person name="Goodwin L."/>
            <person name="Pitluck S."/>
            <person name="Sims D."/>
            <person name="Brettin T."/>
            <person name="Detter J.C."/>
            <person name="Han C."/>
            <person name="Larimer F."/>
            <person name="Land M."/>
            <person name="Hauser L."/>
            <person name="Kyrpides N."/>
            <person name="Mikhailova N."/>
            <person name="Hazen T.C."/>
            <person name="Richardson P."/>
        </authorList>
    </citation>
    <scope>NUCLEOTIDE SEQUENCE [LARGE SCALE GENOMIC DNA]</scope>
    <source>
        <strain>DSM 19637 / Miyazaki F</strain>
    </source>
</reference>
<comment type="function">
    <text evidence="1">DNA-dependent RNA polymerase catalyzes the transcription of DNA into RNA using the four ribonucleoside triphosphates as substrates.</text>
</comment>
<comment type="catalytic activity">
    <reaction evidence="1">
        <text>RNA(n) + a ribonucleoside 5'-triphosphate = RNA(n+1) + diphosphate</text>
        <dbReference type="Rhea" id="RHEA:21248"/>
        <dbReference type="Rhea" id="RHEA-COMP:14527"/>
        <dbReference type="Rhea" id="RHEA-COMP:17342"/>
        <dbReference type="ChEBI" id="CHEBI:33019"/>
        <dbReference type="ChEBI" id="CHEBI:61557"/>
        <dbReference type="ChEBI" id="CHEBI:140395"/>
        <dbReference type="EC" id="2.7.7.6"/>
    </reaction>
</comment>
<comment type="subunit">
    <text evidence="1">Homodimer. The RNAP catalytic core consists of 2 alpha, 1 beta, 1 beta' and 1 omega subunit. When a sigma factor is associated with the core the holoenzyme is formed, which can initiate transcription.</text>
</comment>
<comment type="domain">
    <text evidence="1">The N-terminal domain is essential for RNAP assembly and basal transcription, whereas the C-terminal domain is involved in interaction with transcriptional regulators and with upstream promoter elements.</text>
</comment>
<comment type="similarity">
    <text evidence="1">Belongs to the RNA polymerase alpha chain family.</text>
</comment>
<accession>B8DNK9</accession>
<evidence type="ECO:0000255" key="1">
    <source>
        <dbReference type="HAMAP-Rule" id="MF_00059"/>
    </source>
</evidence>
<proteinExistence type="inferred from homology"/>
<dbReference type="EC" id="2.7.7.6" evidence="1"/>
<dbReference type="EMBL" id="CP001197">
    <property type="protein sequence ID" value="ACL07066.1"/>
    <property type="molecule type" value="Genomic_DNA"/>
</dbReference>
<dbReference type="SMR" id="B8DNK9"/>
<dbReference type="STRING" id="883.DvMF_0105"/>
<dbReference type="KEGG" id="dvm:DvMF_0105"/>
<dbReference type="eggNOG" id="COG0202">
    <property type="taxonomic scope" value="Bacteria"/>
</dbReference>
<dbReference type="HOGENOM" id="CLU_053084_0_1_7"/>
<dbReference type="OrthoDB" id="9805706at2"/>
<dbReference type="GO" id="GO:0005737">
    <property type="term" value="C:cytoplasm"/>
    <property type="evidence" value="ECO:0007669"/>
    <property type="project" value="UniProtKB-ARBA"/>
</dbReference>
<dbReference type="GO" id="GO:0000428">
    <property type="term" value="C:DNA-directed RNA polymerase complex"/>
    <property type="evidence" value="ECO:0007669"/>
    <property type="project" value="UniProtKB-KW"/>
</dbReference>
<dbReference type="GO" id="GO:0003677">
    <property type="term" value="F:DNA binding"/>
    <property type="evidence" value="ECO:0007669"/>
    <property type="project" value="UniProtKB-UniRule"/>
</dbReference>
<dbReference type="GO" id="GO:0003899">
    <property type="term" value="F:DNA-directed RNA polymerase activity"/>
    <property type="evidence" value="ECO:0007669"/>
    <property type="project" value="UniProtKB-UniRule"/>
</dbReference>
<dbReference type="GO" id="GO:0046983">
    <property type="term" value="F:protein dimerization activity"/>
    <property type="evidence" value="ECO:0007669"/>
    <property type="project" value="InterPro"/>
</dbReference>
<dbReference type="GO" id="GO:0006351">
    <property type="term" value="P:DNA-templated transcription"/>
    <property type="evidence" value="ECO:0007669"/>
    <property type="project" value="UniProtKB-UniRule"/>
</dbReference>
<dbReference type="CDD" id="cd06928">
    <property type="entry name" value="RNAP_alpha_NTD"/>
    <property type="match status" value="1"/>
</dbReference>
<dbReference type="FunFam" id="1.10.150.20:FF:000001">
    <property type="entry name" value="DNA-directed RNA polymerase subunit alpha"/>
    <property type="match status" value="1"/>
</dbReference>
<dbReference type="FunFam" id="2.170.120.12:FF:000001">
    <property type="entry name" value="DNA-directed RNA polymerase subunit alpha"/>
    <property type="match status" value="1"/>
</dbReference>
<dbReference type="Gene3D" id="1.10.150.20">
    <property type="entry name" value="5' to 3' exonuclease, C-terminal subdomain"/>
    <property type="match status" value="1"/>
</dbReference>
<dbReference type="Gene3D" id="2.170.120.12">
    <property type="entry name" value="DNA-directed RNA polymerase, insert domain"/>
    <property type="match status" value="1"/>
</dbReference>
<dbReference type="Gene3D" id="3.30.1360.10">
    <property type="entry name" value="RNA polymerase, RBP11-like subunit"/>
    <property type="match status" value="1"/>
</dbReference>
<dbReference type="HAMAP" id="MF_00059">
    <property type="entry name" value="RNApol_bact_RpoA"/>
    <property type="match status" value="1"/>
</dbReference>
<dbReference type="InterPro" id="IPR011262">
    <property type="entry name" value="DNA-dir_RNA_pol_insert"/>
</dbReference>
<dbReference type="InterPro" id="IPR011263">
    <property type="entry name" value="DNA-dir_RNA_pol_RpoA/D/Rpb3"/>
</dbReference>
<dbReference type="InterPro" id="IPR011773">
    <property type="entry name" value="DNA-dir_RpoA"/>
</dbReference>
<dbReference type="InterPro" id="IPR036603">
    <property type="entry name" value="RBP11-like"/>
</dbReference>
<dbReference type="InterPro" id="IPR011260">
    <property type="entry name" value="RNAP_asu_C"/>
</dbReference>
<dbReference type="InterPro" id="IPR036643">
    <property type="entry name" value="RNApol_insert_sf"/>
</dbReference>
<dbReference type="NCBIfam" id="NF003513">
    <property type="entry name" value="PRK05182.1-2"/>
    <property type="match status" value="1"/>
</dbReference>
<dbReference type="NCBIfam" id="NF003519">
    <property type="entry name" value="PRK05182.2-5"/>
    <property type="match status" value="1"/>
</dbReference>
<dbReference type="NCBIfam" id="TIGR02027">
    <property type="entry name" value="rpoA"/>
    <property type="match status" value="1"/>
</dbReference>
<dbReference type="Pfam" id="PF01000">
    <property type="entry name" value="RNA_pol_A_bac"/>
    <property type="match status" value="1"/>
</dbReference>
<dbReference type="Pfam" id="PF03118">
    <property type="entry name" value="RNA_pol_A_CTD"/>
    <property type="match status" value="1"/>
</dbReference>
<dbReference type="Pfam" id="PF01193">
    <property type="entry name" value="RNA_pol_L"/>
    <property type="match status" value="1"/>
</dbReference>
<dbReference type="SMART" id="SM00662">
    <property type="entry name" value="RPOLD"/>
    <property type="match status" value="1"/>
</dbReference>
<dbReference type="SUPFAM" id="SSF47789">
    <property type="entry name" value="C-terminal domain of RNA polymerase alpha subunit"/>
    <property type="match status" value="1"/>
</dbReference>
<dbReference type="SUPFAM" id="SSF56553">
    <property type="entry name" value="Insert subdomain of RNA polymerase alpha subunit"/>
    <property type="match status" value="1"/>
</dbReference>
<dbReference type="SUPFAM" id="SSF55257">
    <property type="entry name" value="RBP11-like subunits of RNA polymerase"/>
    <property type="match status" value="1"/>
</dbReference>
<gene>
    <name evidence="1" type="primary">rpoA</name>
    <name type="ordered locus">DvMF_0105</name>
</gene>
<name>RPOA_NITV9</name>
<organism>
    <name type="scientific">Nitratidesulfovibrio vulgaris (strain DSM 19637 / Miyazaki F)</name>
    <name type="common">Desulfovibrio vulgaris</name>
    <dbReference type="NCBI Taxonomy" id="883"/>
    <lineage>
        <taxon>Bacteria</taxon>
        <taxon>Pseudomonadati</taxon>
        <taxon>Thermodesulfobacteriota</taxon>
        <taxon>Desulfovibrionia</taxon>
        <taxon>Desulfovibrionales</taxon>
        <taxon>Desulfovibrionaceae</taxon>
        <taxon>Nitratidesulfovibrio</taxon>
    </lineage>
</organism>
<sequence length="347" mass="38751">MLIKQGDRLINTRNWSELVKPEQITRDSDPADAMYGKFVCEPLERGYGTTIGNALRRVLLSSLQGAAFVSVKVSGVQHEFTTIPGVLEDVTDIVLNLKQVRLAMDTDEPQFLELSVNKKGAVKAGDIKTNQHVMVLNPDLHIATLTEDLELTFEFEVRMGKGYVPADMHEGLSEEIGLIKLDSSFAPVRKVAYTVEQARVGQMTNYDKLIIEVWTDGSVTPEDAIAYSAKIIKDQISVFINFDERISGESSGNSSGSSDVNENLFKGIDELELSVRATNCLKSANITLVGELVQKSENEMLKTKNFGRKSLDEIKRVLCDMSLDFGMKVDGFEKKYQEWKRKQQNEA</sequence>